<name>AARD_PROST</name>
<comment type="function">
    <text evidence="1">Somehow involved in the cytochrome D branch of aerobic respiration. Seems to be a component of a transport system (By similarity).</text>
</comment>
<comment type="subcellular location">
    <subcellularLocation>
        <location evidence="4">Cell inner membrane</location>
        <topology evidence="4">Multi-pass membrane protein</topology>
    </subcellularLocation>
</comment>
<comment type="similarity">
    <text evidence="4">Belongs to the ABC transporter superfamily.</text>
</comment>
<gene>
    <name type="primary">aarD</name>
</gene>
<accession>Q52402</accession>
<dbReference type="EMBL" id="U30383">
    <property type="protein sequence ID" value="AAB18930.1"/>
    <property type="molecule type" value="Genomic_DNA"/>
</dbReference>
<dbReference type="PIR" id="S70900">
    <property type="entry name" value="S70900"/>
</dbReference>
<dbReference type="SMR" id="Q52402"/>
<dbReference type="STRING" id="588.BGK56_19310"/>
<dbReference type="GO" id="GO:0005886">
    <property type="term" value="C:plasma membrane"/>
    <property type="evidence" value="ECO:0007669"/>
    <property type="project" value="UniProtKB-SubCell"/>
</dbReference>
<dbReference type="GO" id="GO:0140359">
    <property type="term" value="F:ABC-type transporter activity"/>
    <property type="evidence" value="ECO:0007669"/>
    <property type="project" value="InterPro"/>
</dbReference>
<dbReference type="GO" id="GO:0005524">
    <property type="term" value="F:ATP binding"/>
    <property type="evidence" value="ECO:0007669"/>
    <property type="project" value="UniProtKB-KW"/>
</dbReference>
<dbReference type="GO" id="GO:0016887">
    <property type="term" value="F:ATP hydrolysis activity"/>
    <property type="evidence" value="ECO:0007669"/>
    <property type="project" value="InterPro"/>
</dbReference>
<dbReference type="GO" id="GO:0034040">
    <property type="term" value="F:ATPase-coupled lipid transmembrane transporter activity"/>
    <property type="evidence" value="ECO:0007669"/>
    <property type="project" value="TreeGrafter"/>
</dbReference>
<dbReference type="GO" id="GO:0042883">
    <property type="term" value="P:cysteine transport"/>
    <property type="evidence" value="ECO:0007669"/>
    <property type="project" value="InterPro"/>
</dbReference>
<dbReference type="CDD" id="cd18584">
    <property type="entry name" value="ABC_6TM_AarD_CydD"/>
    <property type="match status" value="1"/>
</dbReference>
<dbReference type="FunFam" id="1.20.1560.10:FF:000039">
    <property type="entry name" value="Cysteine/glutathione ABC transporter permease/ATP-binding protein CydD"/>
    <property type="match status" value="1"/>
</dbReference>
<dbReference type="Gene3D" id="1.20.1560.10">
    <property type="entry name" value="ABC transporter type 1, transmembrane domain"/>
    <property type="match status" value="1"/>
</dbReference>
<dbReference type="Gene3D" id="3.40.50.300">
    <property type="entry name" value="P-loop containing nucleotide triphosphate hydrolases"/>
    <property type="match status" value="1"/>
</dbReference>
<dbReference type="InterPro" id="IPR003593">
    <property type="entry name" value="AAA+_ATPase"/>
</dbReference>
<dbReference type="InterPro" id="IPR011527">
    <property type="entry name" value="ABC1_TM_dom"/>
</dbReference>
<dbReference type="InterPro" id="IPR036640">
    <property type="entry name" value="ABC1_TM_sf"/>
</dbReference>
<dbReference type="InterPro" id="IPR003439">
    <property type="entry name" value="ABC_transporter-like_ATP-bd"/>
</dbReference>
<dbReference type="InterPro" id="IPR017871">
    <property type="entry name" value="ABC_transporter-like_CS"/>
</dbReference>
<dbReference type="InterPro" id="IPR014216">
    <property type="entry name" value="ABC_transptr_CydD"/>
</dbReference>
<dbReference type="InterPro" id="IPR027417">
    <property type="entry name" value="P-loop_NTPase"/>
</dbReference>
<dbReference type="InterPro" id="IPR039421">
    <property type="entry name" value="Type_1_exporter"/>
</dbReference>
<dbReference type="NCBIfam" id="TIGR02857">
    <property type="entry name" value="CydD"/>
    <property type="match status" value="1"/>
</dbReference>
<dbReference type="NCBIfam" id="NF008379">
    <property type="entry name" value="PRK11174.1"/>
    <property type="match status" value="1"/>
</dbReference>
<dbReference type="PANTHER" id="PTHR24221">
    <property type="entry name" value="ATP-BINDING CASSETTE SUB-FAMILY B"/>
    <property type="match status" value="1"/>
</dbReference>
<dbReference type="PANTHER" id="PTHR24221:SF261">
    <property type="entry name" value="GLUTATHIONE_L-CYSTEINE TRANSPORT SYSTEM ATP-BINDING_PERMEASE PROTEIN CYDD"/>
    <property type="match status" value="1"/>
</dbReference>
<dbReference type="Pfam" id="PF00664">
    <property type="entry name" value="ABC_membrane"/>
    <property type="match status" value="1"/>
</dbReference>
<dbReference type="Pfam" id="PF00005">
    <property type="entry name" value="ABC_tran"/>
    <property type="match status" value="1"/>
</dbReference>
<dbReference type="SMART" id="SM00382">
    <property type="entry name" value="AAA"/>
    <property type="match status" value="1"/>
</dbReference>
<dbReference type="SUPFAM" id="SSF90123">
    <property type="entry name" value="ABC transporter transmembrane region"/>
    <property type="match status" value="1"/>
</dbReference>
<dbReference type="SUPFAM" id="SSF52540">
    <property type="entry name" value="P-loop containing nucleoside triphosphate hydrolases"/>
    <property type="match status" value="1"/>
</dbReference>
<dbReference type="PROSITE" id="PS50929">
    <property type="entry name" value="ABC_TM1F"/>
    <property type="match status" value="1"/>
</dbReference>
<dbReference type="PROSITE" id="PS00211">
    <property type="entry name" value="ABC_TRANSPORTER_1"/>
    <property type="match status" value="1"/>
</dbReference>
<dbReference type="PROSITE" id="PS50893">
    <property type="entry name" value="ABC_TRANSPORTER_2"/>
    <property type="match status" value="1"/>
</dbReference>
<keyword id="KW-0067">ATP-binding</keyword>
<keyword id="KW-0997">Cell inner membrane</keyword>
<keyword id="KW-1003">Cell membrane</keyword>
<keyword id="KW-0472">Membrane</keyword>
<keyword id="KW-0547">Nucleotide-binding</keyword>
<keyword id="KW-0812">Transmembrane</keyword>
<keyword id="KW-1133">Transmembrane helix</keyword>
<keyword id="KW-0813">Transport</keyword>
<feature type="chain" id="PRO_0000091919" description="Transport ATP-binding protein AarD">
    <location>
        <begin position="1"/>
        <end position="588"/>
    </location>
</feature>
<feature type="transmembrane region" description="Helical" evidence="3">
    <location>
        <begin position="29"/>
        <end position="49"/>
    </location>
</feature>
<feature type="transmembrane region" description="Helical" evidence="3">
    <location>
        <begin position="62"/>
        <end position="82"/>
    </location>
</feature>
<feature type="transmembrane region" description="Helical" evidence="3">
    <location>
        <begin position="149"/>
        <end position="169"/>
    </location>
</feature>
<feature type="transmembrane region" description="Helical" evidence="3">
    <location>
        <begin position="170"/>
        <end position="190"/>
    </location>
</feature>
<feature type="transmembrane region" description="Helical" evidence="3">
    <location>
        <begin position="250"/>
        <end position="270"/>
    </location>
</feature>
<feature type="transmembrane region" description="Helical" evidence="3">
    <location>
        <begin position="276"/>
        <end position="296"/>
    </location>
</feature>
<feature type="domain" description="ABC transmembrane type-1" evidence="3">
    <location>
        <begin position="24"/>
        <end position="316"/>
    </location>
</feature>
<feature type="domain" description="ABC transporter" evidence="2">
    <location>
        <begin position="350"/>
        <end position="583"/>
    </location>
</feature>
<feature type="binding site" evidence="2">
    <location>
        <begin position="383"/>
        <end position="390"/>
    </location>
    <ligand>
        <name>ATP</name>
        <dbReference type="ChEBI" id="CHEBI:30616"/>
    </ligand>
</feature>
<organism>
    <name type="scientific">Providencia stuartii</name>
    <dbReference type="NCBI Taxonomy" id="588"/>
    <lineage>
        <taxon>Bacteria</taxon>
        <taxon>Pseudomonadati</taxon>
        <taxon>Pseudomonadota</taxon>
        <taxon>Gammaproteobacteria</taxon>
        <taxon>Enterobacterales</taxon>
        <taxon>Morganellaceae</taxon>
        <taxon>Providencia</taxon>
    </lineage>
</organism>
<sequence length="588" mass="65778">MDKTRQTELVRWLKQHSTSAKRWLRISMLLGVVSGLLIIAQAWFLAVILQALIMEHTPREQLLTPFILLLAVFVLRALLTVIRERVGFRCGQVVRQEVRNMVLNKLQALGPVWVKGKPAGSWATIVLEQIEDMQEYYSRYLPQMYLAGIIPIMILIAIFPFNWAAALILFATAPLIPIFMALVGLGAADANRRNFVALGRLSGSFLDRLRGLDTLRLFFREKAEVQQIRESTEDFRSRTMEVLRMAFLSSGVLEFFASISIAIVAVYFGFSYLGELNFGSYGLPVTMFAGFLALILSPEFFQPLRDLGTYYHAKAQAVGAAESLVTLLESDGEQKTETGDKTPQDKPIQIEANKLEIYSHDGQRLVGPLDFTIEPQQRIAVFGQSGAGKSSLLNLLLGFLPYKGSIKINGDELKELCPDKWRALIGWVGQNPHLPEQTLIENICLGKPTASEAEIQQAIDDAYVSEFLPMLPDGLNTRLGDYAARLSVGQAQRVAVARTLLKPSRILLLDEPAASLDAHSEKRVMHTLNQLAQQQTTIMVTHLLEETVNYDQIWVMANGQIIQRGHYAQLSQSEGPFARLLAHRSEEL</sequence>
<proteinExistence type="inferred from homology"/>
<evidence type="ECO:0000250" key="1"/>
<evidence type="ECO:0000255" key="2">
    <source>
        <dbReference type="PROSITE-ProRule" id="PRU00434"/>
    </source>
</evidence>
<evidence type="ECO:0000255" key="3">
    <source>
        <dbReference type="PROSITE-ProRule" id="PRU00441"/>
    </source>
</evidence>
<evidence type="ECO:0000305" key="4"/>
<protein>
    <recommendedName>
        <fullName>Transport ATP-binding protein AarD</fullName>
    </recommendedName>
</protein>
<reference key="1">
    <citation type="journal article" date="1996" name="Mol. Microbiol.">
        <title>aarD, a Providencia stuartii homologue of cydD: role in 2'-N-acetyltransferase expression, cell morphology and growth in the presence of an extracellular factor.</title>
        <authorList>
            <person name="Macinga D.R."/>
            <person name="Rather P.N."/>
        </authorList>
    </citation>
    <scope>NUCLEOTIDE SEQUENCE [GENOMIC DNA]</scope>
    <source>
        <strain>PR50</strain>
    </source>
</reference>